<protein>
    <recommendedName>
        <fullName>Zinc metalloproteinase-disintegrin-like 2a</fullName>
        <ecNumber>3.4.24.-</ecNumber>
    </recommendedName>
    <alternativeName>
        <fullName>Snake venom metalloproteinase</fullName>
        <shortName>SVMP</shortName>
    </alternativeName>
</protein>
<dbReference type="EC" id="3.4.24.-"/>
<dbReference type="EMBL" id="JU173707">
    <property type="protein sequence ID" value="AFJ49233.1"/>
    <property type="molecule type" value="mRNA"/>
</dbReference>
<dbReference type="SMR" id="J3S829"/>
<dbReference type="GO" id="GO:0005576">
    <property type="term" value="C:extracellular region"/>
    <property type="evidence" value="ECO:0007669"/>
    <property type="project" value="UniProtKB-SubCell"/>
</dbReference>
<dbReference type="GO" id="GO:0005886">
    <property type="term" value="C:plasma membrane"/>
    <property type="evidence" value="ECO:0007669"/>
    <property type="project" value="TreeGrafter"/>
</dbReference>
<dbReference type="GO" id="GO:0046872">
    <property type="term" value="F:metal ion binding"/>
    <property type="evidence" value="ECO:0007669"/>
    <property type="project" value="UniProtKB-KW"/>
</dbReference>
<dbReference type="GO" id="GO:0004222">
    <property type="term" value="F:metalloendopeptidase activity"/>
    <property type="evidence" value="ECO:0007669"/>
    <property type="project" value="InterPro"/>
</dbReference>
<dbReference type="GO" id="GO:0090729">
    <property type="term" value="F:toxin activity"/>
    <property type="evidence" value="ECO:0007669"/>
    <property type="project" value="UniProtKB-KW"/>
</dbReference>
<dbReference type="GO" id="GO:0006508">
    <property type="term" value="P:proteolysis"/>
    <property type="evidence" value="ECO:0007669"/>
    <property type="project" value="UniProtKB-KW"/>
</dbReference>
<dbReference type="CDD" id="cd04269">
    <property type="entry name" value="ZnMc_adamalysin_II_like"/>
    <property type="match status" value="1"/>
</dbReference>
<dbReference type="FunFam" id="3.40.390.10:FF:000002">
    <property type="entry name" value="Disintegrin and metalloproteinase domain-containing protein 22"/>
    <property type="match status" value="1"/>
</dbReference>
<dbReference type="FunFam" id="4.10.70.10:FF:000001">
    <property type="entry name" value="Disintegrin and metalloproteinase domain-containing protein 22"/>
    <property type="match status" value="1"/>
</dbReference>
<dbReference type="Gene3D" id="3.40.390.10">
    <property type="entry name" value="Collagenase (Catalytic Domain)"/>
    <property type="match status" value="1"/>
</dbReference>
<dbReference type="Gene3D" id="4.10.70.10">
    <property type="entry name" value="Disintegrin domain"/>
    <property type="match status" value="1"/>
</dbReference>
<dbReference type="InterPro" id="IPR006586">
    <property type="entry name" value="ADAM_Cys-rich"/>
</dbReference>
<dbReference type="InterPro" id="IPR018358">
    <property type="entry name" value="Disintegrin_CS"/>
</dbReference>
<dbReference type="InterPro" id="IPR001762">
    <property type="entry name" value="Disintegrin_dom"/>
</dbReference>
<dbReference type="InterPro" id="IPR036436">
    <property type="entry name" value="Disintegrin_dom_sf"/>
</dbReference>
<dbReference type="InterPro" id="IPR024079">
    <property type="entry name" value="MetalloPept_cat_dom_sf"/>
</dbReference>
<dbReference type="InterPro" id="IPR001590">
    <property type="entry name" value="Peptidase_M12B"/>
</dbReference>
<dbReference type="InterPro" id="IPR002870">
    <property type="entry name" value="Peptidase_M12B_N"/>
</dbReference>
<dbReference type="InterPro" id="IPR034027">
    <property type="entry name" value="Reprolysin_adamalysin"/>
</dbReference>
<dbReference type="PANTHER" id="PTHR11905">
    <property type="entry name" value="ADAM A DISINTEGRIN AND METALLOPROTEASE DOMAIN"/>
    <property type="match status" value="1"/>
</dbReference>
<dbReference type="PANTHER" id="PTHR11905:SF32">
    <property type="entry name" value="DISINTEGRIN AND METALLOPROTEINASE DOMAIN-CONTAINING PROTEIN 28"/>
    <property type="match status" value="1"/>
</dbReference>
<dbReference type="Pfam" id="PF08516">
    <property type="entry name" value="ADAM_CR"/>
    <property type="match status" value="1"/>
</dbReference>
<dbReference type="Pfam" id="PF00200">
    <property type="entry name" value="Disintegrin"/>
    <property type="match status" value="1"/>
</dbReference>
<dbReference type="Pfam" id="PF01562">
    <property type="entry name" value="Pep_M12B_propep"/>
    <property type="match status" value="1"/>
</dbReference>
<dbReference type="Pfam" id="PF01421">
    <property type="entry name" value="Reprolysin"/>
    <property type="match status" value="1"/>
</dbReference>
<dbReference type="PRINTS" id="PR00289">
    <property type="entry name" value="DISINTEGRIN"/>
</dbReference>
<dbReference type="SMART" id="SM00608">
    <property type="entry name" value="ACR"/>
    <property type="match status" value="1"/>
</dbReference>
<dbReference type="SMART" id="SM00050">
    <property type="entry name" value="DISIN"/>
    <property type="match status" value="1"/>
</dbReference>
<dbReference type="SUPFAM" id="SSF57552">
    <property type="entry name" value="Blood coagulation inhibitor (disintegrin)"/>
    <property type="match status" value="1"/>
</dbReference>
<dbReference type="SUPFAM" id="SSF55486">
    <property type="entry name" value="Metalloproteases ('zincins'), catalytic domain"/>
    <property type="match status" value="1"/>
</dbReference>
<dbReference type="PROSITE" id="PS50215">
    <property type="entry name" value="ADAM_MEPRO"/>
    <property type="match status" value="1"/>
</dbReference>
<dbReference type="PROSITE" id="PS00427">
    <property type="entry name" value="DISINTEGRIN_1"/>
    <property type="match status" value="1"/>
</dbReference>
<dbReference type="PROSITE" id="PS50214">
    <property type="entry name" value="DISINTEGRIN_2"/>
    <property type="match status" value="1"/>
</dbReference>
<dbReference type="PROSITE" id="PS00142">
    <property type="entry name" value="ZINC_PROTEASE"/>
    <property type="match status" value="1"/>
</dbReference>
<evidence type="ECO:0000250" key="1"/>
<evidence type="ECO:0000255" key="2"/>
<evidence type="ECO:0000255" key="3">
    <source>
        <dbReference type="PROSITE-ProRule" id="PRU00068"/>
    </source>
</evidence>
<evidence type="ECO:0000255" key="4">
    <source>
        <dbReference type="PROSITE-ProRule" id="PRU00276"/>
    </source>
</evidence>
<evidence type="ECO:0000305" key="5"/>
<sequence length="612" mass="67944">MIQVLLVTICLAVFPYQGSSIILGSGNVNDYEVVYPRKVTALPKGAAQPKYEDTMQYEFKVNGEPVVLHLEKNKGLFSEDYSETHYSPDGREITTYPPVEDHCYYHGRIQNDADSTASISACNGLKGHFKLQGEMYLIEPLELSDSEAHAVFKYENVEKEDEAPKMCGVTQNWESYEPIKKASQLNLTPEQQRYLNTKKYIELVIVADNVMVKKYTSNSTAIRTRIYACVNTLNLIYRAFNIHIALVGIEIWSNKDLINVISASNVTLDLFGNWRRRVLLRRKRHDNAQLLTAIDLDGPTIGLARVGSMCDPKCSTGIVQDHSKLDVMVAVTMAHELAHNLGINHDGNQCNCGGNPCIMSATLNFEPAYRFSDCSRDEHWRYLIDNRPPCILNKPLITDIVSPPVCGNYFVEVGEECDCGLPAHCQNPCCNAATCKLRPGTQCEDGECCEQCQFTSAGTECRAAKSECDIAESCTGQSADCPTDNFQRNGRPCLNNNGYCYNGKCPTLDHQCISFFGSSATVAPDVCFNLNLKGEGNFYCRRENTRIFPCAPQDKKCGRLFCVLGPTGNTISCQSTYSQSDLDIGMVDLGTKCGDGRVCNSTRQCVDVNTAY</sequence>
<keyword id="KW-0106">Calcium</keyword>
<keyword id="KW-1217">Cell adhesion impairing toxin</keyword>
<keyword id="KW-1015">Disulfide bond</keyword>
<keyword id="KW-0325">Glycoprotein</keyword>
<keyword id="KW-1199">Hemostasis impairing toxin</keyword>
<keyword id="KW-0378">Hydrolase</keyword>
<keyword id="KW-0479">Metal-binding</keyword>
<keyword id="KW-0482">Metalloprotease</keyword>
<keyword id="KW-0645">Protease</keyword>
<keyword id="KW-0964">Secreted</keyword>
<keyword id="KW-0732">Signal</keyword>
<keyword id="KW-0800">Toxin</keyword>
<keyword id="KW-0862">Zinc</keyword>
<keyword id="KW-0865">Zymogen</keyword>
<name>VM32A_CROAD</name>
<feature type="signal peptide" evidence="2">
    <location>
        <begin position="1"/>
        <end position="20"/>
    </location>
</feature>
<feature type="propeptide" id="PRO_0000425623" evidence="1">
    <location>
        <begin position="21"/>
        <end position="189"/>
    </location>
</feature>
<feature type="chain" id="PRO_0000425624" description="Zinc metalloproteinase-disintegrin-like 2a">
    <location>
        <begin position="190"/>
        <end position="612"/>
    </location>
</feature>
<feature type="domain" description="Peptidase M12B" evidence="4">
    <location>
        <begin position="199"/>
        <end position="395"/>
    </location>
</feature>
<feature type="domain" description="Disintegrin" evidence="3">
    <location>
        <begin position="403"/>
        <end position="489"/>
    </location>
</feature>
<feature type="short sequence motif" description="D/ECD-tripeptide">
    <location>
        <begin position="467"/>
        <end position="469"/>
    </location>
</feature>
<feature type="active site" evidence="4">
    <location>
        <position position="336"/>
    </location>
</feature>
<feature type="binding site" evidence="1">
    <location>
        <position position="202"/>
    </location>
    <ligand>
        <name>Ca(2+)</name>
        <dbReference type="ChEBI" id="CHEBI:29108"/>
        <label>1</label>
    </ligand>
</feature>
<feature type="binding site" evidence="1">
    <location>
        <position position="286"/>
    </location>
    <ligand>
        <name>Ca(2+)</name>
        <dbReference type="ChEBI" id="CHEBI:29108"/>
        <label>1</label>
    </ligand>
</feature>
<feature type="binding site" evidence="4">
    <location>
        <position position="335"/>
    </location>
    <ligand>
        <name>Zn(2+)</name>
        <dbReference type="ChEBI" id="CHEBI:29105"/>
        <note>catalytic</note>
    </ligand>
</feature>
<feature type="binding site" evidence="4">
    <location>
        <position position="339"/>
    </location>
    <ligand>
        <name>Zn(2+)</name>
        <dbReference type="ChEBI" id="CHEBI:29105"/>
        <note>catalytic</note>
    </ligand>
</feature>
<feature type="binding site" evidence="4">
    <location>
        <position position="345"/>
    </location>
    <ligand>
        <name>Zn(2+)</name>
        <dbReference type="ChEBI" id="CHEBI:29105"/>
        <note>catalytic</note>
    </ligand>
</feature>
<feature type="binding site" evidence="1">
    <location>
        <position position="390"/>
    </location>
    <ligand>
        <name>Ca(2+)</name>
        <dbReference type="ChEBI" id="CHEBI:29108"/>
        <label>1</label>
    </ligand>
</feature>
<feature type="binding site" evidence="1">
    <location>
        <position position="393"/>
    </location>
    <ligand>
        <name>Ca(2+)</name>
        <dbReference type="ChEBI" id="CHEBI:29108"/>
        <label>1</label>
    </ligand>
</feature>
<feature type="binding site" evidence="1">
    <location>
        <position position="405"/>
    </location>
    <ligand>
        <name>Ca(2+)</name>
        <dbReference type="ChEBI" id="CHEBI:29108"/>
        <label>2</label>
    </ligand>
</feature>
<feature type="binding site" evidence="1">
    <location>
        <position position="408"/>
    </location>
    <ligand>
        <name>Ca(2+)</name>
        <dbReference type="ChEBI" id="CHEBI:29108"/>
        <label>2</label>
    </ligand>
</feature>
<feature type="binding site" evidence="1">
    <location>
        <position position="410"/>
    </location>
    <ligand>
        <name>Ca(2+)</name>
        <dbReference type="ChEBI" id="CHEBI:29108"/>
        <label>2</label>
    </ligand>
</feature>
<feature type="binding site" evidence="1">
    <location>
        <position position="412"/>
    </location>
    <ligand>
        <name>Ca(2+)</name>
        <dbReference type="ChEBI" id="CHEBI:29108"/>
        <label>2</label>
    </ligand>
</feature>
<feature type="binding site" evidence="1">
    <location>
        <position position="415"/>
    </location>
    <ligand>
        <name>Ca(2+)</name>
        <dbReference type="ChEBI" id="CHEBI:29108"/>
        <label>2</label>
    </ligand>
</feature>
<feature type="binding site" evidence="1">
    <location>
        <position position="418"/>
    </location>
    <ligand>
        <name>Ca(2+)</name>
        <dbReference type="ChEBI" id="CHEBI:29108"/>
        <label>2</label>
    </ligand>
</feature>
<feature type="glycosylation site" description="N-linked (GlcNAc...) asparagine" evidence="2">
    <location>
        <position position="218"/>
    </location>
</feature>
<feature type="disulfide bond" evidence="1">
    <location>
        <begin position="310"/>
        <end position="390"/>
    </location>
</feature>
<feature type="disulfide bond" evidence="1">
    <location>
        <begin position="350"/>
        <end position="374"/>
    </location>
</feature>
<feature type="disulfide bond" evidence="1">
    <location>
        <begin position="352"/>
        <end position="357"/>
    </location>
</feature>
<feature type="disulfide bond" evidence="1">
    <location>
        <begin position="406"/>
        <end position="435"/>
    </location>
</feature>
<feature type="disulfide bond" evidence="1">
    <location>
        <begin position="417"/>
        <end position="430"/>
    </location>
</feature>
<feature type="disulfide bond" evidence="1">
    <location>
        <begin position="419"/>
        <end position="425"/>
    </location>
</feature>
<feature type="disulfide bond" evidence="1">
    <location>
        <begin position="429"/>
        <end position="452"/>
    </location>
</feature>
<feature type="disulfide bond" evidence="1">
    <location>
        <begin position="443"/>
        <end position="449"/>
    </location>
</feature>
<feature type="disulfide bond" evidence="1">
    <location>
        <begin position="448"/>
        <end position="474"/>
    </location>
</feature>
<feature type="disulfide bond" evidence="1">
    <location>
        <begin position="461"/>
        <end position="481"/>
    </location>
</feature>
<feature type="disulfide bond" evidence="1">
    <location>
        <begin position="468"/>
        <end position="500"/>
    </location>
</feature>
<feature type="disulfide bond" evidence="1">
    <location>
        <begin position="493"/>
        <end position="505"/>
    </location>
</feature>
<feature type="disulfide bond" evidence="1">
    <location>
        <begin position="512"/>
        <end position="562"/>
    </location>
</feature>
<feature type="disulfide bond" evidence="1">
    <location>
        <begin position="527"/>
        <end position="573"/>
    </location>
</feature>
<feature type="disulfide bond" evidence="1">
    <location>
        <begin position="540"/>
        <end position="550"/>
    </location>
</feature>
<feature type="disulfide bond" evidence="1">
    <location>
        <begin position="557"/>
        <end position="599"/>
    </location>
</feature>
<feature type="disulfide bond" evidence="1">
    <location>
        <begin position="593"/>
        <end position="605"/>
    </location>
</feature>
<organism>
    <name type="scientific">Crotalus adamanteus</name>
    <name type="common">Eastern diamondback rattlesnake</name>
    <dbReference type="NCBI Taxonomy" id="8729"/>
    <lineage>
        <taxon>Eukaryota</taxon>
        <taxon>Metazoa</taxon>
        <taxon>Chordata</taxon>
        <taxon>Craniata</taxon>
        <taxon>Vertebrata</taxon>
        <taxon>Euteleostomi</taxon>
        <taxon>Lepidosauria</taxon>
        <taxon>Squamata</taxon>
        <taxon>Bifurcata</taxon>
        <taxon>Unidentata</taxon>
        <taxon>Episquamata</taxon>
        <taxon>Toxicofera</taxon>
        <taxon>Serpentes</taxon>
        <taxon>Colubroidea</taxon>
        <taxon>Viperidae</taxon>
        <taxon>Crotalinae</taxon>
        <taxon>Crotalus</taxon>
    </lineage>
</organism>
<proteinExistence type="evidence at protein level"/>
<accession>J3S829</accession>
<comment type="function">
    <text evidence="1">Snake venom metalloproteinase that impairs hemostasis in the envenomed animal.</text>
</comment>
<comment type="cofactor">
    <cofactor evidence="1">
        <name>Zn(2+)</name>
        <dbReference type="ChEBI" id="CHEBI:29105"/>
    </cofactor>
    <text evidence="1">Binds 1 zinc ion per subunit.</text>
</comment>
<comment type="subcellular location">
    <subcellularLocation>
        <location>Secreted</location>
    </subcellularLocation>
</comment>
<comment type="tissue specificity">
    <text>Expressed by the venom gland.</text>
</comment>
<comment type="miscellaneous">
    <text>The disintegrin domain belongs to the long disintegrin subfamily.</text>
</comment>
<comment type="similarity">
    <text evidence="5">Belongs to the venom metalloproteinase (M12B) family. P-III subfamily.</text>
</comment>
<reference key="1">
    <citation type="journal article" date="2012" name="BMC Genomics">
        <title>The venom-gland transcriptome of the eastern diamondback rattlesnake (Crotalus adamanteus).</title>
        <authorList>
            <person name="Rokyta D.R."/>
            <person name="Lemmon A.R."/>
            <person name="Margres M.J."/>
            <person name="Aronow K."/>
        </authorList>
    </citation>
    <scope>NUCLEOTIDE SEQUENCE [MRNA]</scope>
    <source>
        <tissue>Venom gland</tissue>
    </source>
</reference>
<reference key="2">
    <citation type="journal article" date="2014" name="J. Proteomics">
        <title>Linking the transcriptome and proteome to characterize the venom of the eastern diamondback rattlesnake (Crotalus adamanteus).</title>
        <authorList>
            <person name="Margres M.J."/>
            <person name="McGivern J.J."/>
            <person name="Wray K.P."/>
            <person name="Seavy M."/>
            <person name="Calvin K."/>
            <person name="Rokyta D.R."/>
        </authorList>
    </citation>
    <scope>IDENTIFICATION BY MASS SPECTROMETRY</scope>
    <source>
        <tissue>Venom</tissue>
    </source>
</reference>